<feature type="chain" id="PRO_1000206394" description="Small ribosomal subunit protein uS7">
    <location>
        <begin position="1"/>
        <end position="156"/>
    </location>
</feature>
<comment type="function">
    <text evidence="1">One of the primary rRNA binding proteins, it binds directly to 16S rRNA where it nucleates assembly of the head domain of the 30S subunit. Is located at the subunit interface close to the decoding center, probably blocks exit of the E-site tRNA.</text>
</comment>
<comment type="subunit">
    <text evidence="1">Part of the 30S ribosomal subunit. Contacts proteins S9 and S11.</text>
</comment>
<comment type="similarity">
    <text evidence="1">Belongs to the universal ribosomal protein uS7 family.</text>
</comment>
<organism>
    <name type="scientific">Beutenbergia cavernae (strain ATCC BAA-8 / DSM 12333 / CCUG 43141 / JCM 11478 / NBRC 16432 / NCIMB 13614 / HKI 0122)</name>
    <dbReference type="NCBI Taxonomy" id="471853"/>
    <lineage>
        <taxon>Bacteria</taxon>
        <taxon>Bacillati</taxon>
        <taxon>Actinomycetota</taxon>
        <taxon>Actinomycetes</taxon>
        <taxon>Micrococcales</taxon>
        <taxon>Beutenbergiaceae</taxon>
        <taxon>Beutenbergia</taxon>
    </lineage>
</organism>
<gene>
    <name evidence="1" type="primary">rpsG</name>
    <name type="ordered locus">Bcav_3147</name>
</gene>
<keyword id="KW-1185">Reference proteome</keyword>
<keyword id="KW-0687">Ribonucleoprotein</keyword>
<keyword id="KW-0689">Ribosomal protein</keyword>
<keyword id="KW-0694">RNA-binding</keyword>
<keyword id="KW-0699">rRNA-binding</keyword>
<keyword id="KW-0820">tRNA-binding</keyword>
<protein>
    <recommendedName>
        <fullName evidence="1">Small ribosomal subunit protein uS7</fullName>
    </recommendedName>
    <alternativeName>
        <fullName evidence="2">30S ribosomal protein S7</fullName>
    </alternativeName>
</protein>
<name>RS7_BEUC1</name>
<proteinExistence type="inferred from homology"/>
<evidence type="ECO:0000255" key="1">
    <source>
        <dbReference type="HAMAP-Rule" id="MF_00480"/>
    </source>
</evidence>
<evidence type="ECO:0000305" key="2"/>
<dbReference type="EMBL" id="CP001618">
    <property type="protein sequence ID" value="ACQ81391.1"/>
    <property type="molecule type" value="Genomic_DNA"/>
</dbReference>
<dbReference type="RefSeq" id="WP_015883631.1">
    <property type="nucleotide sequence ID" value="NC_012669.1"/>
</dbReference>
<dbReference type="SMR" id="C5C0J5"/>
<dbReference type="STRING" id="471853.Bcav_3147"/>
<dbReference type="KEGG" id="bcv:Bcav_3147"/>
<dbReference type="eggNOG" id="COG0049">
    <property type="taxonomic scope" value="Bacteria"/>
</dbReference>
<dbReference type="HOGENOM" id="CLU_072226_1_1_11"/>
<dbReference type="OrthoDB" id="9807653at2"/>
<dbReference type="Proteomes" id="UP000007962">
    <property type="component" value="Chromosome"/>
</dbReference>
<dbReference type="GO" id="GO:0015935">
    <property type="term" value="C:small ribosomal subunit"/>
    <property type="evidence" value="ECO:0007669"/>
    <property type="project" value="InterPro"/>
</dbReference>
<dbReference type="GO" id="GO:0019843">
    <property type="term" value="F:rRNA binding"/>
    <property type="evidence" value="ECO:0007669"/>
    <property type="project" value="UniProtKB-UniRule"/>
</dbReference>
<dbReference type="GO" id="GO:0003735">
    <property type="term" value="F:structural constituent of ribosome"/>
    <property type="evidence" value="ECO:0007669"/>
    <property type="project" value="InterPro"/>
</dbReference>
<dbReference type="GO" id="GO:0000049">
    <property type="term" value="F:tRNA binding"/>
    <property type="evidence" value="ECO:0007669"/>
    <property type="project" value="UniProtKB-UniRule"/>
</dbReference>
<dbReference type="GO" id="GO:0006412">
    <property type="term" value="P:translation"/>
    <property type="evidence" value="ECO:0007669"/>
    <property type="project" value="UniProtKB-UniRule"/>
</dbReference>
<dbReference type="CDD" id="cd14869">
    <property type="entry name" value="uS7_Bacteria"/>
    <property type="match status" value="1"/>
</dbReference>
<dbReference type="FunFam" id="1.10.455.10:FF:000001">
    <property type="entry name" value="30S ribosomal protein S7"/>
    <property type="match status" value="1"/>
</dbReference>
<dbReference type="Gene3D" id="1.10.455.10">
    <property type="entry name" value="Ribosomal protein S7 domain"/>
    <property type="match status" value="1"/>
</dbReference>
<dbReference type="HAMAP" id="MF_00480_B">
    <property type="entry name" value="Ribosomal_uS7_B"/>
    <property type="match status" value="1"/>
</dbReference>
<dbReference type="InterPro" id="IPR000235">
    <property type="entry name" value="Ribosomal_uS7"/>
</dbReference>
<dbReference type="InterPro" id="IPR005717">
    <property type="entry name" value="Ribosomal_uS7_bac/org-type"/>
</dbReference>
<dbReference type="InterPro" id="IPR020606">
    <property type="entry name" value="Ribosomal_uS7_CS"/>
</dbReference>
<dbReference type="InterPro" id="IPR023798">
    <property type="entry name" value="Ribosomal_uS7_dom"/>
</dbReference>
<dbReference type="InterPro" id="IPR036823">
    <property type="entry name" value="Ribosomal_uS7_dom_sf"/>
</dbReference>
<dbReference type="NCBIfam" id="TIGR01029">
    <property type="entry name" value="rpsG_bact"/>
    <property type="match status" value="1"/>
</dbReference>
<dbReference type="PANTHER" id="PTHR11205">
    <property type="entry name" value="RIBOSOMAL PROTEIN S7"/>
    <property type="match status" value="1"/>
</dbReference>
<dbReference type="Pfam" id="PF00177">
    <property type="entry name" value="Ribosomal_S7"/>
    <property type="match status" value="1"/>
</dbReference>
<dbReference type="PIRSF" id="PIRSF002122">
    <property type="entry name" value="RPS7p_RPS7a_RPS5e_RPS7o"/>
    <property type="match status" value="1"/>
</dbReference>
<dbReference type="SUPFAM" id="SSF47973">
    <property type="entry name" value="Ribosomal protein S7"/>
    <property type="match status" value="1"/>
</dbReference>
<dbReference type="PROSITE" id="PS00052">
    <property type="entry name" value="RIBOSOMAL_S7"/>
    <property type="match status" value="1"/>
</dbReference>
<sequence length="156" mass="17498">MPRKGPAPKRPLVVDPVYGSPTVTQLVNRVLVDGKKSTAERIVYGALEGVRDKTQGDPATVLKRALDNVRPSLEVKSRRVGGTTYQVPVDVRPSRATALAMRWLVDYSRVRREKTMTERLMNEILDASNGLGAAVKRREDTHKMAESNKAFAHYRW</sequence>
<accession>C5C0J5</accession>
<reference key="1">
    <citation type="journal article" date="2009" name="Stand. Genomic Sci.">
        <title>Complete genome sequence of Beutenbergia cavernae type strain (HKI 0122).</title>
        <authorList>
            <person name="Land M."/>
            <person name="Pukall R."/>
            <person name="Abt B."/>
            <person name="Goker M."/>
            <person name="Rohde M."/>
            <person name="Glavina Del Rio T."/>
            <person name="Tice H."/>
            <person name="Copeland A."/>
            <person name="Cheng J.F."/>
            <person name="Lucas S."/>
            <person name="Chen F."/>
            <person name="Nolan M."/>
            <person name="Bruce D."/>
            <person name="Goodwin L."/>
            <person name="Pitluck S."/>
            <person name="Ivanova N."/>
            <person name="Mavromatis K."/>
            <person name="Ovchinnikova G."/>
            <person name="Pati A."/>
            <person name="Chen A."/>
            <person name="Palaniappan K."/>
            <person name="Hauser L."/>
            <person name="Chang Y.J."/>
            <person name="Jefferies C.C."/>
            <person name="Saunders E."/>
            <person name="Brettin T."/>
            <person name="Detter J.C."/>
            <person name="Han C."/>
            <person name="Chain P."/>
            <person name="Bristow J."/>
            <person name="Eisen J.A."/>
            <person name="Markowitz V."/>
            <person name="Hugenholtz P."/>
            <person name="Kyrpides N.C."/>
            <person name="Klenk H.P."/>
            <person name="Lapidus A."/>
        </authorList>
    </citation>
    <scope>NUCLEOTIDE SEQUENCE [LARGE SCALE GENOMIC DNA]</scope>
    <source>
        <strain>ATCC BAA-8 / DSM 12333 / CCUG 43141 / JCM 11478 / NBRC 16432 / NCIMB 13614 / HKI 0122</strain>
    </source>
</reference>